<reference key="1">
    <citation type="journal article" date="2004" name="Phytochemistry">
        <title>Molecular cloning, expression, and characterization of adenylate isopentenyltransferase from hop (Humulus lupulus L.).</title>
        <authorList>
            <person name="Sakano Y."/>
            <person name="Okada Y."/>
            <person name="Matsunaga A."/>
            <person name="Suwama T."/>
            <person name="Kaneko T."/>
            <person name="Ito K."/>
            <person name="Noguchi H."/>
            <person name="Abe I."/>
        </authorList>
    </citation>
    <scope>NUCLEOTIDE SEQUENCE [GENOMIC DNA]</scope>
    <scope>MUTAGENESIS OF ASP-62</scope>
    <scope>FUNCTION</scope>
    <scope>TISSUE SPECIFICITY</scope>
    <scope>BIOPHYSICOCHEMICAL PROPERTIES</scope>
    <scope>CATALYTIC ACTIVITY</scope>
    <scope>COFACTOR</scope>
</reference>
<reference key="2">
    <citation type="journal article" date="2010" name="Nucleic Acids Res.">
        <title>Crystal structure and substrate specificity of plant adenylate isopentenyltransferase from Humulus lupulus: distinctive binding affinity for purine and pyrimidine nucleotides.</title>
        <authorList>
            <person name="Chu H.M."/>
            <person name="Ko T.P."/>
            <person name="Wang A.H."/>
        </authorList>
    </citation>
    <scope>X-RAY CRYSTALLOGRAPHY (2.37 ANGSTROMS) IN COMPLEX WITH ATP</scope>
</reference>
<gene>
    <name evidence="3 4" type="primary">AIPT</name>
</gene>
<evidence type="ECO:0000269" key="1">
    <source>
    </source>
</evidence>
<evidence type="ECO:0000269" key="2">
    <source>
    </source>
</evidence>
<evidence type="ECO:0000303" key="3">
    <source>
    </source>
</evidence>
<evidence type="ECO:0000303" key="4">
    <source>
    </source>
</evidence>
<evidence type="ECO:0000305" key="5"/>
<evidence type="ECO:0007744" key="6">
    <source>
        <dbReference type="PDB" id="3A8T"/>
    </source>
</evidence>
<evidence type="ECO:0007829" key="7">
    <source>
        <dbReference type="PDB" id="3A8T"/>
    </source>
</evidence>
<accession>Q5GHF7</accession>
<keyword id="KW-0002">3D-structure</keyword>
<keyword id="KW-0067">ATP-binding</keyword>
<keyword id="KW-0203">Cytokinin biosynthesis</keyword>
<keyword id="KW-0547">Nucleotide-binding</keyword>
<keyword id="KW-0808">Transferase</keyword>
<protein>
    <recommendedName>
        <fullName evidence="3 4">Adenylate isopentenyltransferase</fullName>
        <shortName evidence="4">HlAIPT</shortName>
        <ecNumber evidence="1">2.5.1.112</ecNumber>
        <ecNumber evidence="1">2.5.1.27</ecNumber>
    </recommendedName>
    <alternativeName>
        <fullName evidence="3">Adenylate dimethylallyltransferase</fullName>
    </alternativeName>
    <alternativeName>
        <fullName evidence="3">Cytokinin synthase</fullName>
    </alternativeName>
</protein>
<proteinExistence type="evidence at protein level"/>
<dbReference type="EC" id="2.5.1.112" evidence="1"/>
<dbReference type="EC" id="2.5.1.27" evidence="1"/>
<dbReference type="EMBL" id="AY533024">
    <property type="protein sequence ID" value="AAS94327.1"/>
    <property type="molecule type" value="Genomic_DNA"/>
</dbReference>
<dbReference type="PDB" id="3A8T">
    <property type="method" value="X-ray"/>
    <property type="resolution" value="2.37 A"/>
    <property type="chains" value="A=1-329"/>
</dbReference>
<dbReference type="PDBsum" id="3A8T"/>
<dbReference type="SMR" id="Q5GHF7"/>
<dbReference type="KEGG" id="ag:AAS94327"/>
<dbReference type="BRENDA" id="2.5.1.112">
    <property type="organism ID" value="2716"/>
</dbReference>
<dbReference type="BRENDA" id="2.5.1.27">
    <property type="organism ID" value="2716"/>
</dbReference>
<dbReference type="BRENDA" id="2.5.1.75">
    <property type="organism ID" value="2716"/>
</dbReference>
<dbReference type="SABIO-RK" id="Q5GHF7"/>
<dbReference type="EvolutionaryTrace" id="Q5GHF7"/>
<dbReference type="GO" id="GO:0005739">
    <property type="term" value="C:mitochondrion"/>
    <property type="evidence" value="ECO:0007669"/>
    <property type="project" value="TreeGrafter"/>
</dbReference>
<dbReference type="GO" id="GO:0009824">
    <property type="term" value="F:AMP dimethylallyltransferase activity"/>
    <property type="evidence" value="ECO:0000314"/>
    <property type="project" value="UniProtKB"/>
</dbReference>
<dbReference type="GO" id="GO:0005524">
    <property type="term" value="F:ATP binding"/>
    <property type="evidence" value="ECO:0007669"/>
    <property type="project" value="UniProtKB-KW"/>
</dbReference>
<dbReference type="GO" id="GO:0052622">
    <property type="term" value="F:ATP/ADP dimethylallyltransferase activity"/>
    <property type="evidence" value="ECO:0007669"/>
    <property type="project" value="UniProtKB-EC"/>
</dbReference>
<dbReference type="GO" id="GO:0052381">
    <property type="term" value="F:tRNA dimethylallyltransferase activity"/>
    <property type="evidence" value="ECO:0007669"/>
    <property type="project" value="TreeGrafter"/>
</dbReference>
<dbReference type="GO" id="GO:0034265">
    <property type="term" value="P:isopentenyl adenine biosynthetic process"/>
    <property type="evidence" value="ECO:0000305"/>
    <property type="project" value="UniProtKB"/>
</dbReference>
<dbReference type="GO" id="GO:0006400">
    <property type="term" value="P:tRNA modification"/>
    <property type="evidence" value="ECO:0007669"/>
    <property type="project" value="TreeGrafter"/>
</dbReference>
<dbReference type="FunFam" id="1.10.287.890:FF:000003">
    <property type="entry name" value="Adenylate isopentenyltransferase"/>
    <property type="match status" value="1"/>
</dbReference>
<dbReference type="Gene3D" id="1.10.287.890">
    <property type="entry name" value="Crystal structure of tRNA isopentenylpyrophosphate transferase (bh2366) domain"/>
    <property type="match status" value="1"/>
</dbReference>
<dbReference type="Gene3D" id="3.40.50.300">
    <property type="entry name" value="P-loop containing nucleotide triphosphate hydrolases"/>
    <property type="match status" value="1"/>
</dbReference>
<dbReference type="InterPro" id="IPR039657">
    <property type="entry name" value="Dimethylallyltransferase"/>
</dbReference>
<dbReference type="InterPro" id="IPR027417">
    <property type="entry name" value="P-loop_NTPase"/>
</dbReference>
<dbReference type="PANTHER" id="PTHR11088:SF86">
    <property type="entry name" value="ADENYLATE ISOPENTENYLTRANSFERASE 4-RELATED"/>
    <property type="match status" value="1"/>
</dbReference>
<dbReference type="PANTHER" id="PTHR11088">
    <property type="entry name" value="TRNA DIMETHYLALLYLTRANSFERASE"/>
    <property type="match status" value="1"/>
</dbReference>
<dbReference type="Pfam" id="PF01715">
    <property type="entry name" value="IPPT"/>
    <property type="match status" value="2"/>
</dbReference>
<dbReference type="SUPFAM" id="SSF52540">
    <property type="entry name" value="P-loop containing nucleoside triphosphate hydrolases"/>
    <property type="match status" value="1"/>
</dbReference>
<organism>
    <name type="scientific">Humulus lupulus</name>
    <name type="common">European hop</name>
    <dbReference type="NCBI Taxonomy" id="3486"/>
    <lineage>
        <taxon>Eukaryota</taxon>
        <taxon>Viridiplantae</taxon>
        <taxon>Streptophyta</taxon>
        <taxon>Embryophyta</taxon>
        <taxon>Tracheophyta</taxon>
        <taxon>Spermatophyta</taxon>
        <taxon>Magnoliopsida</taxon>
        <taxon>eudicotyledons</taxon>
        <taxon>Gunneridae</taxon>
        <taxon>Pentapetalae</taxon>
        <taxon>rosids</taxon>
        <taxon>fabids</taxon>
        <taxon>Rosales</taxon>
        <taxon>Cannabaceae</taxon>
        <taxon>Humulus</taxon>
    </lineage>
</organism>
<sequence>MDYASVAMAAAPTTTTTTNVSLRRQRHRKEKLLVLMGATGTGKSRLSIDLAAHFPLEVINSDKMQVYKGLDITTNKISVPDRGGVPHHLLGEVDPARGELTPADFRSLAGKAVSEITGRRKLPVLVGGSNSFIHALLVDRFDSSGPGVFEEGSHSVVSSELRYDCCFLWVDVSVKVLTDYLAKRVDDMLELGMFDELAEFYSPEDEDHDEDSATRTGLRKAIGVPEFDRYFEKFRPGDVEGEDPGRDRVRRGAFEEAVRAIKENTCHLAKRQIGKILRLKGAGWDLRRLDATESFRAAMTSDSGEKCTEIWEKQVLEPSVKIVSRFLDE</sequence>
<feature type="chain" id="PRO_0000391078" description="Adenylate isopentenyltransferase">
    <location>
        <begin position="1"/>
        <end position="329"/>
    </location>
</feature>
<feature type="binding site" evidence="2 6">
    <location>
        <begin position="37"/>
        <end position="44"/>
    </location>
    <ligand>
        <name>ATP</name>
        <dbReference type="ChEBI" id="CHEBI:30616"/>
    </ligand>
</feature>
<feature type="binding site" evidence="2 6">
    <location>
        <position position="63"/>
    </location>
    <ligand>
        <name>ATP</name>
        <dbReference type="ChEBI" id="CHEBI:30616"/>
    </ligand>
</feature>
<feature type="binding site" evidence="2 6">
    <location>
        <position position="74"/>
    </location>
    <ligand>
        <name>ATP</name>
        <dbReference type="ChEBI" id="CHEBI:30616"/>
    </ligand>
</feature>
<feature type="binding site" evidence="2 6">
    <location>
        <begin position="129"/>
        <end position="131"/>
    </location>
    <ligand>
        <name>ATP</name>
        <dbReference type="ChEBI" id="CHEBI:30616"/>
    </ligand>
</feature>
<feature type="binding site" evidence="2 6">
    <location>
        <begin position="220"/>
        <end position="222"/>
    </location>
    <ligand>
        <name>ATP</name>
        <dbReference type="ChEBI" id="CHEBI:30616"/>
    </ligand>
</feature>
<feature type="binding site" evidence="2 6">
    <location>
        <position position="313"/>
    </location>
    <ligand>
        <name>ATP</name>
        <dbReference type="ChEBI" id="CHEBI:30616"/>
    </ligand>
</feature>
<feature type="mutagenesis site" description="Loss of activity." evidence="1">
    <original>D</original>
    <variation>A</variation>
    <location>
        <position position="62"/>
    </location>
</feature>
<feature type="strand" evidence="7">
    <location>
        <begin position="31"/>
        <end position="36"/>
    </location>
</feature>
<feature type="helix" evidence="7">
    <location>
        <begin position="43"/>
        <end position="51"/>
    </location>
</feature>
<feature type="strand" evidence="7">
    <location>
        <begin position="56"/>
        <end position="60"/>
    </location>
</feature>
<feature type="strand" evidence="7">
    <location>
        <begin position="67"/>
        <end position="69"/>
    </location>
</feature>
<feature type="turn" evidence="7">
    <location>
        <begin position="71"/>
        <end position="75"/>
    </location>
</feature>
<feature type="helix" evidence="7">
    <location>
        <begin position="80"/>
        <end position="82"/>
    </location>
</feature>
<feature type="strand" evidence="7">
    <location>
        <begin position="87"/>
        <end position="91"/>
    </location>
</feature>
<feature type="helix" evidence="7">
    <location>
        <begin position="95"/>
        <end position="97"/>
    </location>
</feature>
<feature type="helix" evidence="7">
    <location>
        <begin position="102"/>
        <end position="118"/>
    </location>
</feature>
<feature type="strand" evidence="7">
    <location>
        <begin position="122"/>
        <end position="126"/>
    </location>
</feature>
<feature type="helix" evidence="7">
    <location>
        <begin position="130"/>
        <end position="137"/>
    </location>
</feature>
<feature type="strand" evidence="7">
    <location>
        <begin position="138"/>
        <end position="140"/>
    </location>
</feature>
<feature type="strand" evidence="7">
    <location>
        <begin position="161"/>
        <end position="171"/>
    </location>
</feature>
<feature type="helix" evidence="7">
    <location>
        <begin position="174"/>
        <end position="191"/>
    </location>
</feature>
<feature type="helix" evidence="7">
    <location>
        <begin position="193"/>
        <end position="200"/>
    </location>
</feature>
<feature type="helix" evidence="7">
    <location>
        <begin position="212"/>
        <end position="214"/>
    </location>
</feature>
<feature type="helix" evidence="7">
    <location>
        <begin position="217"/>
        <end position="220"/>
    </location>
</feature>
<feature type="helix" evidence="7">
    <location>
        <begin position="224"/>
        <end position="233"/>
    </location>
</feature>
<feature type="helix" evidence="7">
    <location>
        <begin position="247"/>
        <end position="279"/>
    </location>
</feature>
<feature type="strand" evidence="7">
    <location>
        <begin position="286"/>
        <end position="290"/>
    </location>
</feature>
<feature type="helix" evidence="7">
    <location>
        <begin position="292"/>
        <end position="299"/>
    </location>
</feature>
<feature type="turn" evidence="7">
    <location>
        <begin position="301"/>
        <end position="304"/>
    </location>
</feature>
<feature type="helix" evidence="7">
    <location>
        <begin position="305"/>
        <end position="314"/>
    </location>
</feature>
<feature type="helix" evidence="7">
    <location>
        <begin position="316"/>
        <end position="328"/>
    </location>
</feature>
<name>IPT_HUMLU</name>
<comment type="function">
    <text evidence="1">Involved in cytokinin biosynthesis. Catalyzes the transfer of an isopentenyl group from dimethylallyl diphosphate (DMAPP) to ATP, ADP and AMP. GMP, IMP, CMP or UMP are not used as substrates.</text>
</comment>
<comment type="catalytic activity">
    <reaction evidence="1">
        <text>dimethylallyl diphosphate + AMP = N(6)-(dimethylallyl)adenosine 5'-phosphate + diphosphate</text>
        <dbReference type="Rhea" id="RHEA:15285"/>
        <dbReference type="ChEBI" id="CHEBI:33019"/>
        <dbReference type="ChEBI" id="CHEBI:57526"/>
        <dbReference type="ChEBI" id="CHEBI:57623"/>
        <dbReference type="ChEBI" id="CHEBI:456215"/>
        <dbReference type="EC" id="2.5.1.27"/>
    </reaction>
</comment>
<comment type="catalytic activity">
    <reaction evidence="1">
        <text>dimethylallyl diphosphate + ADP = N(6)-(dimethylallyl)adenosine 5'-diphosphate + diphosphate</text>
        <dbReference type="Rhea" id="RHEA:36327"/>
        <dbReference type="ChEBI" id="CHEBI:33019"/>
        <dbReference type="ChEBI" id="CHEBI:57623"/>
        <dbReference type="ChEBI" id="CHEBI:73533"/>
        <dbReference type="ChEBI" id="CHEBI:456216"/>
        <dbReference type="EC" id="2.5.1.112"/>
    </reaction>
</comment>
<comment type="catalytic activity">
    <reaction evidence="1">
        <text>dimethylallyl diphosphate + ATP = N(6)-(dimethylallyl)adenosine 5'-triphosphate + diphosphate</text>
        <dbReference type="Rhea" id="RHEA:36331"/>
        <dbReference type="ChEBI" id="CHEBI:30616"/>
        <dbReference type="ChEBI" id="CHEBI:33019"/>
        <dbReference type="ChEBI" id="CHEBI:57623"/>
        <dbReference type="ChEBI" id="CHEBI:73532"/>
        <dbReference type="EC" id="2.5.1.112"/>
    </reaction>
</comment>
<comment type="cofactor">
    <cofactor evidence="1">
        <name>Mg(2+)</name>
        <dbReference type="ChEBI" id="CHEBI:18420"/>
    </cofactor>
</comment>
<comment type="biophysicochemical properties">
    <kinetics>
        <KM evidence="1">759 uM for AMP</KM>
        <KM evidence="1">19.3 uM for ADP</KM>
        <KM evidence="1">16.2 uM for ATP</KM>
        <KM evidence="1">19.5 uM for DMAPP</KM>
    </kinetics>
    <phDependence>
        <text evidence="1">Optimum pH is 6.0-9.0.</text>
    </phDependence>
</comment>
<comment type="tissue specificity">
    <text evidence="1">Expressed in roots, stems, leaves and cones.</text>
</comment>
<comment type="similarity">
    <text evidence="5">Belongs to the IPP transferase family.</text>
</comment>